<accession>P81670</accession>
<keyword id="KW-0903">Direct protein sequencing</keyword>
<protein>
    <recommendedName>
        <fullName>Unknown protein from 2D-PAGE of needles</fullName>
    </recommendedName>
    <alternativeName>
        <fullName>N140</fullName>
    </alternativeName>
</protein>
<proteinExistence type="evidence at protein level"/>
<comment type="miscellaneous">
    <text>On the 2D-gel the determined pI of this unknown protein is: 6.2, its MW is: 25 kDa.</text>
</comment>
<name>UN03_PINPS</name>
<sequence length="53" mass="5829">VENIVIGHMEVVACADSRVSFNLVLTPAETVAYGNLPFDQQLVLCEIITHPNF</sequence>
<evidence type="ECO:0000305" key="1"/>
<organism>
    <name type="scientific">Pinus pinaster</name>
    <name type="common">Maritime pine</name>
    <dbReference type="NCBI Taxonomy" id="71647"/>
    <lineage>
        <taxon>Eukaryota</taxon>
        <taxon>Viridiplantae</taxon>
        <taxon>Streptophyta</taxon>
        <taxon>Embryophyta</taxon>
        <taxon>Tracheophyta</taxon>
        <taxon>Spermatophyta</taxon>
        <taxon>Pinopsida</taxon>
        <taxon>Pinidae</taxon>
        <taxon>Conifers I</taxon>
        <taxon>Pinales</taxon>
        <taxon>Pinaceae</taxon>
        <taxon>Pinus</taxon>
        <taxon>Pinus subgen. Pinus</taxon>
    </lineage>
</organism>
<feature type="chain" id="PRO_0000055555" description="Unknown protein from 2D-PAGE of needles">
    <location>
        <begin position="1" status="less than"/>
        <end position="53" status="greater than"/>
    </location>
</feature>
<feature type="sequence variant">
    <original>I</original>
    <variation>L</variation>
    <location>
        <position position="4"/>
    </location>
</feature>
<feature type="sequence variant">
    <original>I</original>
    <variation>L</variation>
    <location>
        <position position="6"/>
    </location>
</feature>
<feature type="sequence variant">
    <original>V</original>
    <variation>S</variation>
    <location>
        <position position="19"/>
    </location>
</feature>
<feature type="sequence variant">
    <original>L</original>
    <variation>Y</variation>
    <location>
        <position position="23"/>
    </location>
</feature>
<feature type="sequence variant">
    <original>V</original>
    <variation>L</variation>
    <location>
        <position position="31"/>
    </location>
</feature>
<feature type="sequence variant">
    <original>T</original>
    <variation>G</variation>
    <location>
        <position position="49"/>
    </location>
</feature>
<feature type="sequence variant">
    <original>H</original>
    <variation>G</variation>
    <location>
        <position position="50"/>
    </location>
</feature>
<feature type="non-consecutive residues" evidence="1">
    <location>
        <begin position="8"/>
        <end position="9"/>
    </location>
</feature>
<feature type="non-consecutive residues" evidence="1">
    <location>
        <begin position="18"/>
        <end position="19"/>
    </location>
</feature>
<feature type="non-consecutive residues" evidence="1">
    <location>
        <begin position="31"/>
        <end position="32"/>
    </location>
</feature>
<feature type="non-consecutive residues" evidence="1">
    <location>
        <begin position="46"/>
        <end position="47"/>
    </location>
</feature>
<feature type="non-terminal residue">
    <location>
        <position position="1"/>
    </location>
</feature>
<feature type="non-terminal residue">
    <location>
        <position position="53"/>
    </location>
</feature>
<reference key="1">
    <citation type="journal article" date="1999" name="Electrophoresis">
        <title>Separation and characterization of needle and xylem maritime pine proteins.</title>
        <authorList>
            <person name="Costa P."/>
            <person name="Pionneau C."/>
            <person name="Bauw G."/>
            <person name="Dubos C."/>
            <person name="Bahrman N."/>
            <person name="Kremer A."/>
            <person name="Frigerio J.-M."/>
            <person name="Plomion C."/>
        </authorList>
    </citation>
    <scope>PROTEIN SEQUENCE</scope>
    <source>
        <tissue>Needle</tissue>
    </source>
</reference>